<comment type="function">
    <text evidence="1">Involved in pre-mRNA splicing and required for cell cycle progression at G2/M.</text>
</comment>
<comment type="subunit">
    <text evidence="1">Associated with the spliceosome.</text>
</comment>
<comment type="subcellular location">
    <subcellularLocation>
        <location evidence="1">Cytoplasm</location>
    </subcellularLocation>
    <subcellularLocation>
        <location evidence="1">Nucleus</location>
    </subcellularLocation>
</comment>
<comment type="similarity">
    <text evidence="3">Belongs to the WD repeat PRL1/PRL2 family.</text>
</comment>
<gene>
    <name type="primary">PRP46</name>
    <name type="ordered locus">CNBG1700</name>
</gene>
<feature type="chain" id="PRO_0000410337" description="Pre-mRNA-splicing factor PRP46">
    <location>
        <begin position="1"/>
        <end position="473"/>
    </location>
</feature>
<feature type="repeat" description="WD 1">
    <location>
        <begin position="180"/>
        <end position="219"/>
    </location>
</feature>
<feature type="repeat" description="WD 2">
    <location>
        <begin position="222"/>
        <end position="261"/>
    </location>
</feature>
<feature type="repeat" description="WD 3">
    <location>
        <begin position="264"/>
        <end position="303"/>
    </location>
</feature>
<feature type="repeat" description="WD 4">
    <location>
        <begin position="306"/>
        <end position="347"/>
    </location>
</feature>
<feature type="repeat" description="WD 5">
    <location>
        <begin position="349"/>
        <end position="388"/>
    </location>
</feature>
<feature type="repeat" description="WD 6">
    <location>
        <begin position="391"/>
        <end position="429"/>
    </location>
</feature>
<feature type="repeat" description="WD 7">
    <location>
        <begin position="440"/>
        <end position="473"/>
    </location>
</feature>
<feature type="region of interest" description="Disordered" evidence="2">
    <location>
        <begin position="1"/>
        <end position="21"/>
    </location>
</feature>
<feature type="region of interest" description="Disordered" evidence="2">
    <location>
        <begin position="103"/>
        <end position="126"/>
    </location>
</feature>
<feature type="compositionally biased region" description="Polar residues" evidence="2">
    <location>
        <begin position="1"/>
        <end position="14"/>
    </location>
</feature>
<reference key="1">
    <citation type="journal article" date="2005" name="Science">
        <title>The genome of the basidiomycetous yeast and human pathogen Cryptococcus neoformans.</title>
        <authorList>
            <person name="Loftus B.J."/>
            <person name="Fung E."/>
            <person name="Roncaglia P."/>
            <person name="Rowley D."/>
            <person name="Amedeo P."/>
            <person name="Bruno D."/>
            <person name="Vamathevan J."/>
            <person name="Miranda M."/>
            <person name="Anderson I.J."/>
            <person name="Fraser J.A."/>
            <person name="Allen J.E."/>
            <person name="Bosdet I.E."/>
            <person name="Brent M.R."/>
            <person name="Chiu R."/>
            <person name="Doering T.L."/>
            <person name="Donlin M.J."/>
            <person name="D'Souza C.A."/>
            <person name="Fox D.S."/>
            <person name="Grinberg V."/>
            <person name="Fu J."/>
            <person name="Fukushima M."/>
            <person name="Haas B.J."/>
            <person name="Huang J.C."/>
            <person name="Janbon G."/>
            <person name="Jones S.J.M."/>
            <person name="Koo H.L."/>
            <person name="Krzywinski M.I."/>
            <person name="Kwon-Chung K.J."/>
            <person name="Lengeler K.B."/>
            <person name="Maiti R."/>
            <person name="Marra M.A."/>
            <person name="Marra R.E."/>
            <person name="Mathewson C.A."/>
            <person name="Mitchell T.G."/>
            <person name="Pertea M."/>
            <person name="Riggs F.R."/>
            <person name="Salzberg S.L."/>
            <person name="Schein J.E."/>
            <person name="Shvartsbeyn A."/>
            <person name="Shin H."/>
            <person name="Shumway M."/>
            <person name="Specht C.A."/>
            <person name="Suh B.B."/>
            <person name="Tenney A."/>
            <person name="Utterback T.R."/>
            <person name="Wickes B.L."/>
            <person name="Wortman J.R."/>
            <person name="Wye N.H."/>
            <person name="Kronstad J.W."/>
            <person name="Lodge J.K."/>
            <person name="Heitman J."/>
            <person name="Davis R.W."/>
            <person name="Fraser C.M."/>
            <person name="Hyman R.W."/>
        </authorList>
    </citation>
    <scope>NUCLEOTIDE SEQUENCE [LARGE SCALE GENOMIC DNA]</scope>
    <source>
        <strain>B-3501A</strain>
    </source>
</reference>
<organism>
    <name type="scientific">Cryptococcus neoformans var. neoformans serotype D (strain B-3501A)</name>
    <name type="common">Filobasidiella neoformans</name>
    <dbReference type="NCBI Taxonomy" id="283643"/>
    <lineage>
        <taxon>Eukaryota</taxon>
        <taxon>Fungi</taxon>
        <taxon>Dikarya</taxon>
        <taxon>Basidiomycota</taxon>
        <taxon>Agaricomycotina</taxon>
        <taxon>Tremellomycetes</taxon>
        <taxon>Tremellales</taxon>
        <taxon>Cryptococcaceae</taxon>
        <taxon>Cryptococcus</taxon>
        <taxon>Cryptococcus neoformans species complex</taxon>
    </lineage>
</organism>
<name>PRP46_CRYNB</name>
<sequence>MSTSLETPSGTSAGPSIVASGLPPLADLVRAGSKRTRVVYGAETSAVEDDGLARANKIKLATKLAIEYKDVQTLPPILQAQQTGPAGPKRPTQPSIAASATAGPNVKLIGGPEAEKASSSTPQAVAEPRSLVKFRHQEGFAAEGGQATSRLSQALMRKKEAREVKPEYHPEWKLTRVISGHMGWVRAVAMDPGSQWFATGAGDRVIKIWDLASGELKLSLTGHISTIRGLAVSDRHPYLFSCAEDKMVKCWDLETNKVIRHYHGHFSGVYSLSVHPTLDVLVTGGRDASVRVWDMRTRANIFTLTGHTSTVGDVKTQDSDPQIISGSMDSTVRLWDLAAGKCMNTLTHHKKSVRALAIHPTEYSFASASSGGNNIKKWKCPEGIFVNNFVGHEAIINTLSINSENVLFSGADNGTLTLWDYKTGLPFQHLKDIPQPGSLDAEAGVFCSTFDKTGTRLITGGADKTIKVYSEQA</sequence>
<accession>P0CS49</accession>
<accession>Q55PP3</accession>
<accession>Q5KDR4</accession>
<evidence type="ECO:0000250" key="1"/>
<evidence type="ECO:0000256" key="2">
    <source>
        <dbReference type="SAM" id="MobiDB-lite"/>
    </source>
</evidence>
<evidence type="ECO:0000305" key="3"/>
<protein>
    <recommendedName>
        <fullName>Pre-mRNA-splicing factor PRP46</fullName>
    </recommendedName>
    <alternativeName>
        <fullName>Pre-mRNA-processing protein 46</fullName>
    </alternativeName>
</protein>
<proteinExistence type="inferred from homology"/>
<keyword id="KW-0963">Cytoplasm</keyword>
<keyword id="KW-0507">mRNA processing</keyword>
<keyword id="KW-0508">mRNA splicing</keyword>
<keyword id="KW-0539">Nucleus</keyword>
<keyword id="KW-0677">Repeat</keyword>
<keyword id="KW-0747">Spliceosome</keyword>
<keyword id="KW-0853">WD repeat</keyword>
<dbReference type="EMBL" id="AAEY01000038">
    <property type="protein sequence ID" value="EAL19541.1"/>
    <property type="molecule type" value="Genomic_DNA"/>
</dbReference>
<dbReference type="RefSeq" id="XP_774188.1">
    <property type="nucleotide sequence ID" value="XM_769095.1"/>
</dbReference>
<dbReference type="SMR" id="P0CS49"/>
<dbReference type="GeneID" id="4937204"/>
<dbReference type="KEGG" id="cnb:CNBG1700"/>
<dbReference type="VEuPathDB" id="FungiDB:CNBG1700"/>
<dbReference type="HOGENOM" id="CLU_000288_72_2_1"/>
<dbReference type="OrthoDB" id="1323at5206"/>
<dbReference type="GO" id="GO:0071013">
    <property type="term" value="C:catalytic step 2 spliceosome"/>
    <property type="evidence" value="ECO:0007669"/>
    <property type="project" value="TreeGrafter"/>
</dbReference>
<dbReference type="GO" id="GO:0005737">
    <property type="term" value="C:cytoplasm"/>
    <property type="evidence" value="ECO:0007669"/>
    <property type="project" value="UniProtKB-SubCell"/>
</dbReference>
<dbReference type="GO" id="GO:0071011">
    <property type="term" value="C:precatalytic spliceosome"/>
    <property type="evidence" value="ECO:0007669"/>
    <property type="project" value="TreeGrafter"/>
</dbReference>
<dbReference type="GO" id="GO:0000974">
    <property type="term" value="C:Prp19 complex"/>
    <property type="evidence" value="ECO:0007669"/>
    <property type="project" value="TreeGrafter"/>
</dbReference>
<dbReference type="GO" id="GO:0000398">
    <property type="term" value="P:mRNA splicing, via spliceosome"/>
    <property type="evidence" value="ECO:0007669"/>
    <property type="project" value="InterPro"/>
</dbReference>
<dbReference type="CDD" id="cd00200">
    <property type="entry name" value="WD40"/>
    <property type="match status" value="1"/>
</dbReference>
<dbReference type="FunFam" id="2.130.10.10:FF:000012">
    <property type="entry name" value="Putative pleiotropic regulator 1"/>
    <property type="match status" value="1"/>
</dbReference>
<dbReference type="Gene3D" id="2.130.10.10">
    <property type="entry name" value="YVTN repeat-like/Quinoprotein amine dehydrogenase"/>
    <property type="match status" value="1"/>
</dbReference>
<dbReference type="InterPro" id="IPR020472">
    <property type="entry name" value="G-protein_beta_WD-40_rep"/>
</dbReference>
<dbReference type="InterPro" id="IPR045241">
    <property type="entry name" value="Prp46/PLRG1-like"/>
</dbReference>
<dbReference type="InterPro" id="IPR015943">
    <property type="entry name" value="WD40/YVTN_repeat-like_dom_sf"/>
</dbReference>
<dbReference type="InterPro" id="IPR019775">
    <property type="entry name" value="WD40_repeat_CS"/>
</dbReference>
<dbReference type="InterPro" id="IPR036322">
    <property type="entry name" value="WD40_repeat_dom_sf"/>
</dbReference>
<dbReference type="InterPro" id="IPR001680">
    <property type="entry name" value="WD40_rpt"/>
</dbReference>
<dbReference type="PANTHER" id="PTHR19923:SF0">
    <property type="entry name" value="PLEIOTROPIC REGULATOR 1"/>
    <property type="match status" value="1"/>
</dbReference>
<dbReference type="PANTHER" id="PTHR19923">
    <property type="entry name" value="WD40 REPEAT PROTEINPRL1/PRL2-RELATED"/>
    <property type="match status" value="1"/>
</dbReference>
<dbReference type="Pfam" id="PF00400">
    <property type="entry name" value="WD40"/>
    <property type="match status" value="7"/>
</dbReference>
<dbReference type="PRINTS" id="PR00320">
    <property type="entry name" value="GPROTEINBRPT"/>
</dbReference>
<dbReference type="SMART" id="SM00320">
    <property type="entry name" value="WD40"/>
    <property type="match status" value="7"/>
</dbReference>
<dbReference type="SUPFAM" id="SSF50978">
    <property type="entry name" value="WD40 repeat-like"/>
    <property type="match status" value="1"/>
</dbReference>
<dbReference type="PROSITE" id="PS00678">
    <property type="entry name" value="WD_REPEATS_1"/>
    <property type="match status" value="2"/>
</dbReference>
<dbReference type="PROSITE" id="PS50082">
    <property type="entry name" value="WD_REPEATS_2"/>
    <property type="match status" value="5"/>
</dbReference>
<dbReference type="PROSITE" id="PS50294">
    <property type="entry name" value="WD_REPEATS_REGION"/>
    <property type="match status" value="1"/>
</dbReference>